<name>RSMI_XYLFA</name>
<reference key="1">
    <citation type="journal article" date="2000" name="Nature">
        <title>The genome sequence of the plant pathogen Xylella fastidiosa.</title>
        <authorList>
            <person name="Simpson A.J.G."/>
            <person name="Reinach F.C."/>
            <person name="Arruda P."/>
            <person name="Abreu F.A."/>
            <person name="Acencio M."/>
            <person name="Alvarenga R."/>
            <person name="Alves L.M.C."/>
            <person name="Araya J.E."/>
            <person name="Baia G.S."/>
            <person name="Baptista C.S."/>
            <person name="Barros M.H."/>
            <person name="Bonaccorsi E.D."/>
            <person name="Bordin S."/>
            <person name="Bove J.M."/>
            <person name="Briones M.R.S."/>
            <person name="Bueno M.R.P."/>
            <person name="Camargo A.A."/>
            <person name="Camargo L.E.A."/>
            <person name="Carraro D.M."/>
            <person name="Carrer H."/>
            <person name="Colauto N.B."/>
            <person name="Colombo C."/>
            <person name="Costa F.F."/>
            <person name="Costa M.C.R."/>
            <person name="Costa-Neto C.M."/>
            <person name="Coutinho L.L."/>
            <person name="Cristofani M."/>
            <person name="Dias-Neto E."/>
            <person name="Docena C."/>
            <person name="El-Dorry H."/>
            <person name="Facincani A.P."/>
            <person name="Ferreira A.J.S."/>
            <person name="Ferreira V.C.A."/>
            <person name="Ferro J.A."/>
            <person name="Fraga J.S."/>
            <person name="Franca S.C."/>
            <person name="Franco M.C."/>
            <person name="Frohme M."/>
            <person name="Furlan L.R."/>
            <person name="Garnier M."/>
            <person name="Goldman G.H."/>
            <person name="Goldman M.H.S."/>
            <person name="Gomes S.L."/>
            <person name="Gruber A."/>
            <person name="Ho P.L."/>
            <person name="Hoheisel J.D."/>
            <person name="Junqueira M.L."/>
            <person name="Kemper E.L."/>
            <person name="Kitajima J.P."/>
            <person name="Krieger J.E."/>
            <person name="Kuramae E.E."/>
            <person name="Laigret F."/>
            <person name="Lambais M.R."/>
            <person name="Leite L.C.C."/>
            <person name="Lemos E.G.M."/>
            <person name="Lemos M.V.F."/>
            <person name="Lopes S.A."/>
            <person name="Lopes C.R."/>
            <person name="Machado J.A."/>
            <person name="Machado M.A."/>
            <person name="Madeira A.M.B.N."/>
            <person name="Madeira H.M.F."/>
            <person name="Marino C.L."/>
            <person name="Marques M.V."/>
            <person name="Martins E.A.L."/>
            <person name="Martins E.M.F."/>
            <person name="Matsukuma A.Y."/>
            <person name="Menck C.F.M."/>
            <person name="Miracca E.C."/>
            <person name="Miyaki C.Y."/>
            <person name="Monteiro-Vitorello C.B."/>
            <person name="Moon D.H."/>
            <person name="Nagai M.A."/>
            <person name="Nascimento A.L.T.O."/>
            <person name="Netto L.E.S."/>
            <person name="Nhani A. Jr."/>
            <person name="Nobrega F.G."/>
            <person name="Nunes L.R."/>
            <person name="Oliveira M.A."/>
            <person name="de Oliveira M.C."/>
            <person name="de Oliveira R.C."/>
            <person name="Palmieri D.A."/>
            <person name="Paris A."/>
            <person name="Peixoto B.R."/>
            <person name="Pereira G.A.G."/>
            <person name="Pereira H.A. Jr."/>
            <person name="Pesquero J.B."/>
            <person name="Quaggio R.B."/>
            <person name="Roberto P.G."/>
            <person name="Rodrigues V."/>
            <person name="de Rosa A.J.M."/>
            <person name="de Rosa V.E. Jr."/>
            <person name="de Sa R.G."/>
            <person name="Santelli R.V."/>
            <person name="Sawasaki H.E."/>
            <person name="da Silva A.C.R."/>
            <person name="da Silva A.M."/>
            <person name="da Silva F.R."/>
            <person name="Silva W.A. Jr."/>
            <person name="da Silveira J.F."/>
            <person name="Silvestri M.L.Z."/>
            <person name="Siqueira W.J."/>
            <person name="de Souza A.A."/>
            <person name="de Souza A.P."/>
            <person name="Terenzi M.F."/>
            <person name="Truffi D."/>
            <person name="Tsai S.M."/>
            <person name="Tsuhako M.H."/>
            <person name="Vallada H."/>
            <person name="Van Sluys M.A."/>
            <person name="Verjovski-Almeida S."/>
            <person name="Vettore A.L."/>
            <person name="Zago M.A."/>
            <person name="Zatz M."/>
            <person name="Meidanis J."/>
            <person name="Setubal J.C."/>
        </authorList>
    </citation>
    <scope>NUCLEOTIDE SEQUENCE [LARGE SCALE GENOMIC DNA]</scope>
    <source>
        <strain>9a5c</strain>
    </source>
</reference>
<organism>
    <name type="scientific">Xylella fastidiosa (strain 9a5c)</name>
    <dbReference type="NCBI Taxonomy" id="160492"/>
    <lineage>
        <taxon>Bacteria</taxon>
        <taxon>Pseudomonadati</taxon>
        <taxon>Pseudomonadota</taxon>
        <taxon>Gammaproteobacteria</taxon>
        <taxon>Lysobacterales</taxon>
        <taxon>Lysobacteraceae</taxon>
        <taxon>Xylella</taxon>
    </lineage>
</organism>
<gene>
    <name evidence="1" type="primary">rsmI</name>
    <name type="ordered locus">XF_0552</name>
</gene>
<sequence>MSTPGTLHIVATPIGNLGDLSPRAQHILRTVTMICAEDTRHTRQLLAHFGIERPLLALHAHNEDTLAERIITRLISGASLALVSDAGTPLISDPGFLLVRAARAAGIRVTPVPGPSALIAALSVSGLPSNRFTFEGFLPAKPTARRDRLTHLAHEPRTLIFYEASHRIAECLTDLATIFGSMRAAVVARELTKIFETVLDGTLATLQTQVANDDNQRKGEFVIIVQGAADQDAAKITEGRRVYALLKEHLPPSSAAKLAAEITGAPRKALYGG</sequence>
<protein>
    <recommendedName>
        <fullName evidence="1">Ribosomal RNA small subunit methyltransferase I</fullName>
        <ecNumber evidence="1">2.1.1.198</ecNumber>
    </recommendedName>
    <alternativeName>
        <fullName evidence="1">16S rRNA 2'-O-ribose C1402 methyltransferase</fullName>
    </alternativeName>
    <alternativeName>
        <fullName evidence="1">rRNA (cytidine-2'-O-)-methyltransferase RsmI</fullName>
    </alternativeName>
</protein>
<evidence type="ECO:0000255" key="1">
    <source>
        <dbReference type="HAMAP-Rule" id="MF_01877"/>
    </source>
</evidence>
<dbReference type="EC" id="2.1.1.198" evidence="1"/>
<dbReference type="EMBL" id="AE003849">
    <property type="protein sequence ID" value="AAF83362.1"/>
    <property type="molecule type" value="Genomic_DNA"/>
</dbReference>
<dbReference type="PIR" id="F82792">
    <property type="entry name" value="F82792"/>
</dbReference>
<dbReference type="RefSeq" id="WP_010893078.1">
    <property type="nucleotide sequence ID" value="NC_002488.3"/>
</dbReference>
<dbReference type="SMR" id="Q9PFV5"/>
<dbReference type="STRING" id="160492.XF_0552"/>
<dbReference type="KEGG" id="xfa:XF_0552"/>
<dbReference type="eggNOG" id="COG0313">
    <property type="taxonomic scope" value="Bacteria"/>
</dbReference>
<dbReference type="HOGENOM" id="CLU_044779_4_0_6"/>
<dbReference type="Proteomes" id="UP000000812">
    <property type="component" value="Chromosome"/>
</dbReference>
<dbReference type="GO" id="GO:0005737">
    <property type="term" value="C:cytoplasm"/>
    <property type="evidence" value="ECO:0007669"/>
    <property type="project" value="UniProtKB-SubCell"/>
</dbReference>
<dbReference type="GO" id="GO:0070677">
    <property type="term" value="F:rRNA (cytosine-2'-O-)-methyltransferase activity"/>
    <property type="evidence" value="ECO:0007669"/>
    <property type="project" value="UniProtKB-UniRule"/>
</dbReference>
<dbReference type="CDD" id="cd11648">
    <property type="entry name" value="RsmI"/>
    <property type="match status" value="1"/>
</dbReference>
<dbReference type="FunFam" id="3.30.950.10:FF:000002">
    <property type="entry name" value="Ribosomal RNA small subunit methyltransferase I"/>
    <property type="match status" value="1"/>
</dbReference>
<dbReference type="FunFam" id="3.40.1010.10:FF:000007">
    <property type="entry name" value="Ribosomal RNA small subunit methyltransferase I"/>
    <property type="match status" value="1"/>
</dbReference>
<dbReference type="Gene3D" id="3.40.1010.10">
    <property type="entry name" value="Cobalt-precorrin-4 Transmethylase, Domain 1"/>
    <property type="match status" value="1"/>
</dbReference>
<dbReference type="Gene3D" id="3.30.950.10">
    <property type="entry name" value="Methyltransferase, Cobalt-precorrin-4 Transmethylase, Domain 2"/>
    <property type="match status" value="1"/>
</dbReference>
<dbReference type="HAMAP" id="MF_01877">
    <property type="entry name" value="16SrRNA_methyltr_I"/>
    <property type="match status" value="1"/>
</dbReference>
<dbReference type="InterPro" id="IPR000878">
    <property type="entry name" value="4pyrrol_Mease"/>
</dbReference>
<dbReference type="InterPro" id="IPR035996">
    <property type="entry name" value="4pyrrol_Methylase_sf"/>
</dbReference>
<dbReference type="InterPro" id="IPR014777">
    <property type="entry name" value="4pyrrole_Mease_sub1"/>
</dbReference>
<dbReference type="InterPro" id="IPR014776">
    <property type="entry name" value="4pyrrole_Mease_sub2"/>
</dbReference>
<dbReference type="InterPro" id="IPR008189">
    <property type="entry name" value="rRNA_ssu_MeTfrase_I"/>
</dbReference>
<dbReference type="InterPro" id="IPR053910">
    <property type="entry name" value="RsmI_HTH"/>
</dbReference>
<dbReference type="InterPro" id="IPR018063">
    <property type="entry name" value="SAM_MeTrfase_RsmI_CS"/>
</dbReference>
<dbReference type="NCBIfam" id="TIGR00096">
    <property type="entry name" value="16S rRNA (cytidine(1402)-2'-O)-methyltransferase"/>
    <property type="match status" value="1"/>
</dbReference>
<dbReference type="PANTHER" id="PTHR46111">
    <property type="entry name" value="RIBOSOMAL RNA SMALL SUBUNIT METHYLTRANSFERASE I"/>
    <property type="match status" value="1"/>
</dbReference>
<dbReference type="PANTHER" id="PTHR46111:SF1">
    <property type="entry name" value="RIBOSOMAL RNA SMALL SUBUNIT METHYLTRANSFERASE I"/>
    <property type="match status" value="1"/>
</dbReference>
<dbReference type="Pfam" id="PF23016">
    <property type="entry name" value="RsmI_C"/>
    <property type="match status" value="1"/>
</dbReference>
<dbReference type="Pfam" id="PF00590">
    <property type="entry name" value="TP_methylase"/>
    <property type="match status" value="1"/>
</dbReference>
<dbReference type="PIRSF" id="PIRSF005917">
    <property type="entry name" value="MTase_YraL"/>
    <property type="match status" value="1"/>
</dbReference>
<dbReference type="SUPFAM" id="SSF53790">
    <property type="entry name" value="Tetrapyrrole methylase"/>
    <property type="match status" value="1"/>
</dbReference>
<dbReference type="PROSITE" id="PS01296">
    <property type="entry name" value="RSMI"/>
    <property type="match status" value="1"/>
</dbReference>
<feature type="chain" id="PRO_0000211962" description="Ribosomal RNA small subunit methyltransferase I">
    <location>
        <begin position="1"/>
        <end position="273"/>
    </location>
</feature>
<keyword id="KW-0963">Cytoplasm</keyword>
<keyword id="KW-0489">Methyltransferase</keyword>
<keyword id="KW-0698">rRNA processing</keyword>
<keyword id="KW-0949">S-adenosyl-L-methionine</keyword>
<keyword id="KW-0808">Transferase</keyword>
<accession>Q9PFV5</accession>
<comment type="function">
    <text evidence="1">Catalyzes the 2'-O-methylation of the ribose of cytidine 1402 (C1402) in 16S rRNA.</text>
</comment>
<comment type="catalytic activity">
    <reaction evidence="1">
        <text>cytidine(1402) in 16S rRNA + S-adenosyl-L-methionine = 2'-O-methylcytidine(1402) in 16S rRNA + S-adenosyl-L-homocysteine + H(+)</text>
        <dbReference type="Rhea" id="RHEA:42924"/>
        <dbReference type="Rhea" id="RHEA-COMP:10285"/>
        <dbReference type="Rhea" id="RHEA-COMP:10286"/>
        <dbReference type="ChEBI" id="CHEBI:15378"/>
        <dbReference type="ChEBI" id="CHEBI:57856"/>
        <dbReference type="ChEBI" id="CHEBI:59789"/>
        <dbReference type="ChEBI" id="CHEBI:74495"/>
        <dbReference type="ChEBI" id="CHEBI:82748"/>
        <dbReference type="EC" id="2.1.1.198"/>
    </reaction>
</comment>
<comment type="subcellular location">
    <subcellularLocation>
        <location evidence="1">Cytoplasm</location>
    </subcellularLocation>
</comment>
<comment type="similarity">
    <text evidence="1">Belongs to the methyltransferase superfamily. RsmI family.</text>
</comment>
<proteinExistence type="inferred from homology"/>